<reference key="1">
    <citation type="journal article" date="2000" name="Nature">
        <title>Complete genome sequence of Pseudomonas aeruginosa PAO1, an opportunistic pathogen.</title>
        <authorList>
            <person name="Stover C.K."/>
            <person name="Pham X.-Q.T."/>
            <person name="Erwin A.L."/>
            <person name="Mizoguchi S.D."/>
            <person name="Warrener P."/>
            <person name="Hickey M.J."/>
            <person name="Brinkman F.S.L."/>
            <person name="Hufnagle W.O."/>
            <person name="Kowalik D.J."/>
            <person name="Lagrou M."/>
            <person name="Garber R.L."/>
            <person name="Goltry L."/>
            <person name="Tolentino E."/>
            <person name="Westbrock-Wadman S."/>
            <person name="Yuan Y."/>
            <person name="Brody L.L."/>
            <person name="Coulter S.N."/>
            <person name="Folger K.R."/>
            <person name="Kas A."/>
            <person name="Larbig K."/>
            <person name="Lim R.M."/>
            <person name="Smith K.A."/>
            <person name="Spencer D.H."/>
            <person name="Wong G.K.-S."/>
            <person name="Wu Z."/>
            <person name="Paulsen I.T."/>
            <person name="Reizer J."/>
            <person name="Saier M.H. Jr."/>
            <person name="Hancock R.E.W."/>
            <person name="Lory S."/>
            <person name="Olson M.V."/>
        </authorList>
    </citation>
    <scope>NUCLEOTIDE SEQUENCE [LARGE SCALE GENOMIC DNA]</scope>
    <source>
        <strain>ATCC 15692 / DSM 22644 / CIP 104116 / JCM 14847 / LMG 12228 / 1C / PRS 101 / PAO1</strain>
    </source>
</reference>
<keyword id="KW-0997">Cell inner membrane</keyword>
<keyword id="KW-1003">Cell membrane</keyword>
<keyword id="KW-0249">Electron transport</keyword>
<keyword id="KW-0285">Flavoprotein</keyword>
<keyword id="KW-0288">FMN</keyword>
<keyword id="KW-0349">Heme</keyword>
<keyword id="KW-0408">Iron</keyword>
<keyword id="KW-0472">Membrane</keyword>
<keyword id="KW-0479">Metal-binding</keyword>
<keyword id="KW-1185">Reference proteome</keyword>
<keyword id="KW-0812">Transmembrane</keyword>
<keyword id="KW-1133">Transmembrane helix</keyword>
<keyword id="KW-0813">Transport</keyword>
<comment type="function">
    <text evidence="1">Part of the MsrPQ system that repairs oxidized periplasmic proteins containing methionine sulfoxide residues (Met-O), using respiratory chain electrons. Thus protects these proteins from oxidative-stress damage caused by reactive species of oxygen and chlorine generated by the host defense mechanisms. MsrPQ is essential for the maintenance of envelope integrity under bleach stress, rescuing a wide series of structurally unrelated periplasmic proteins from methionine oxidation. MsrQ provides electrons for reduction to the reductase catalytic subunit MsrP, using the quinone pool of the respiratory chain.</text>
</comment>
<comment type="cofactor">
    <cofactor evidence="1">
        <name>FMN</name>
        <dbReference type="ChEBI" id="CHEBI:58210"/>
    </cofactor>
    <text evidence="1">Binds 1 FMN per subunit.</text>
</comment>
<comment type="cofactor">
    <cofactor evidence="1">
        <name>heme b</name>
        <dbReference type="ChEBI" id="CHEBI:60344"/>
    </cofactor>
    <text evidence="1">Binds 1 heme b (iron(II)-protoporphyrin IX) group per subunit.</text>
</comment>
<comment type="subunit">
    <text evidence="1">Heterodimer of a catalytic subunit (MsrP) and a heme-binding subunit (MsrQ).</text>
</comment>
<comment type="subcellular location">
    <subcellularLocation>
        <location evidence="1">Cell inner membrane</location>
        <topology evidence="1">Multi-pass membrane protein</topology>
    </subcellularLocation>
</comment>
<comment type="similarity">
    <text evidence="1">Belongs to the MsrQ family.</text>
</comment>
<dbReference type="EMBL" id="AE004091">
    <property type="protein sequence ID" value="AAG08077.1"/>
    <property type="molecule type" value="Genomic_DNA"/>
</dbReference>
<dbReference type="PIR" id="B83059">
    <property type="entry name" value="B83059"/>
</dbReference>
<dbReference type="RefSeq" id="NP_253379.1">
    <property type="nucleotide sequence ID" value="NC_002516.2"/>
</dbReference>
<dbReference type="RefSeq" id="WP_003113449.1">
    <property type="nucleotide sequence ID" value="NZ_QZGE01000018.1"/>
</dbReference>
<dbReference type="SMR" id="Q9HVA5"/>
<dbReference type="FunCoup" id="Q9HVA5">
    <property type="interactions" value="53"/>
</dbReference>
<dbReference type="STRING" id="208964.PA4691"/>
<dbReference type="PaxDb" id="208964-PA4691"/>
<dbReference type="GeneID" id="881474"/>
<dbReference type="KEGG" id="pae:PA4691"/>
<dbReference type="PATRIC" id="fig|208964.12.peg.4914"/>
<dbReference type="PseudoCAP" id="PA4691"/>
<dbReference type="HOGENOM" id="CLU_080662_2_0_6"/>
<dbReference type="InParanoid" id="Q9HVA5"/>
<dbReference type="OrthoDB" id="9788328at2"/>
<dbReference type="PhylomeDB" id="Q9HVA5"/>
<dbReference type="BioCyc" id="PAER208964:G1FZ6-4795-MONOMER"/>
<dbReference type="Proteomes" id="UP000002438">
    <property type="component" value="Chromosome"/>
</dbReference>
<dbReference type="GO" id="GO:0005886">
    <property type="term" value="C:plasma membrane"/>
    <property type="evidence" value="ECO:0000318"/>
    <property type="project" value="GO_Central"/>
</dbReference>
<dbReference type="GO" id="GO:0009055">
    <property type="term" value="F:electron transfer activity"/>
    <property type="evidence" value="ECO:0007669"/>
    <property type="project" value="UniProtKB-UniRule"/>
</dbReference>
<dbReference type="GO" id="GO:0010181">
    <property type="term" value="F:FMN binding"/>
    <property type="evidence" value="ECO:0000318"/>
    <property type="project" value="GO_Central"/>
</dbReference>
<dbReference type="GO" id="GO:0020037">
    <property type="term" value="F:heme binding"/>
    <property type="evidence" value="ECO:0000318"/>
    <property type="project" value="GO_Central"/>
</dbReference>
<dbReference type="GO" id="GO:0046872">
    <property type="term" value="F:metal ion binding"/>
    <property type="evidence" value="ECO:0007669"/>
    <property type="project" value="UniProtKB-KW"/>
</dbReference>
<dbReference type="GO" id="GO:0016679">
    <property type="term" value="F:oxidoreductase activity, acting on diphenols and related substances as donors"/>
    <property type="evidence" value="ECO:0000318"/>
    <property type="project" value="GO_Central"/>
</dbReference>
<dbReference type="GO" id="GO:0030091">
    <property type="term" value="P:protein repair"/>
    <property type="evidence" value="ECO:0007669"/>
    <property type="project" value="UniProtKB-UniRule"/>
</dbReference>
<dbReference type="HAMAP" id="MF_01207">
    <property type="entry name" value="MsrQ"/>
    <property type="match status" value="1"/>
</dbReference>
<dbReference type="InterPro" id="IPR013130">
    <property type="entry name" value="Fe3_Rdtase_TM_dom"/>
</dbReference>
<dbReference type="InterPro" id="IPR022837">
    <property type="entry name" value="MsrQ-like"/>
</dbReference>
<dbReference type="NCBIfam" id="NF003831">
    <property type="entry name" value="PRK05419.1-2"/>
    <property type="match status" value="1"/>
</dbReference>
<dbReference type="PANTHER" id="PTHR36964">
    <property type="entry name" value="PROTEIN-METHIONINE-SULFOXIDE REDUCTASE HEME-BINDING SUBUNIT MSRQ"/>
    <property type="match status" value="1"/>
</dbReference>
<dbReference type="PANTHER" id="PTHR36964:SF1">
    <property type="entry name" value="PROTEIN-METHIONINE-SULFOXIDE REDUCTASE HEME-BINDING SUBUNIT MSRQ"/>
    <property type="match status" value="1"/>
</dbReference>
<dbReference type="Pfam" id="PF01794">
    <property type="entry name" value="Ferric_reduct"/>
    <property type="match status" value="1"/>
</dbReference>
<feature type="chain" id="PRO_0000091578" description="Protein-methionine-sulfoxide reductase heme-binding subunit MsrQ">
    <location>
        <begin position="1"/>
        <end position="202"/>
    </location>
</feature>
<feature type="transmembrane region" description="Helical" evidence="1">
    <location>
        <begin position="8"/>
        <end position="28"/>
    </location>
</feature>
<feature type="transmembrane region" description="Helical" evidence="1">
    <location>
        <begin position="42"/>
        <end position="62"/>
    </location>
</feature>
<feature type="transmembrane region" description="Helical" evidence="1">
    <location>
        <begin position="75"/>
        <end position="95"/>
    </location>
</feature>
<feature type="transmembrane region" description="Helical" evidence="1">
    <location>
        <begin position="110"/>
        <end position="130"/>
    </location>
</feature>
<feature type="transmembrane region" description="Helical" evidence="1">
    <location>
        <begin position="147"/>
        <end position="167"/>
    </location>
</feature>
<feature type="transmembrane region" description="Helical" evidence="1">
    <location>
        <begin position="169"/>
        <end position="189"/>
    </location>
</feature>
<name>MSRQ_PSEAE</name>
<protein>
    <recommendedName>
        <fullName evidence="1">Protein-methionine-sulfoxide reductase heme-binding subunit MsrQ</fullName>
    </recommendedName>
    <alternativeName>
        <fullName evidence="1">Flavocytochrome MsrQ</fullName>
    </alternativeName>
</protein>
<evidence type="ECO:0000255" key="1">
    <source>
        <dbReference type="HAMAP-Rule" id="MF_01207"/>
    </source>
</evidence>
<gene>
    <name evidence="1" type="primary">msrQ</name>
    <name type="ordered locus">PA4691</name>
</gene>
<sequence length="202" mass="23175">MRYWYLRLAVFLGALAVPAWWLYQAWIFALGPDPGKTLVDRLGLGALVLLLLTLAMTPLQKLSGWPGWIAVRRQLGLWCFTYVLLHLSAYYVFILGLDWGQLGIELSKRPYIIVGMLGFVCLFLLAITSNRFAMRKLGSRWKKLHRLVYLILGLGLLHMLWVVRADLEEWTLYAVVGASLMLLRLPSIARRLPRLRTRHGVS</sequence>
<accession>Q9HVA5</accession>
<proteinExistence type="inferred from homology"/>
<organism>
    <name type="scientific">Pseudomonas aeruginosa (strain ATCC 15692 / DSM 22644 / CIP 104116 / JCM 14847 / LMG 12228 / 1C / PRS 101 / PAO1)</name>
    <dbReference type="NCBI Taxonomy" id="208964"/>
    <lineage>
        <taxon>Bacteria</taxon>
        <taxon>Pseudomonadati</taxon>
        <taxon>Pseudomonadota</taxon>
        <taxon>Gammaproteobacteria</taxon>
        <taxon>Pseudomonadales</taxon>
        <taxon>Pseudomonadaceae</taxon>
        <taxon>Pseudomonas</taxon>
    </lineage>
</organism>